<feature type="chain" id="PRO_0000189315" description="Ferredoxin">
    <location>
        <begin position="1"/>
        <end position="97"/>
    </location>
</feature>
<feature type="domain" description="2Fe-2S ferredoxin-type" evidence="1">
    <location>
        <begin position="3"/>
        <end position="93"/>
    </location>
</feature>
<feature type="binding site" evidence="1">
    <location>
        <position position="39"/>
    </location>
    <ligand>
        <name>[2Fe-2S] cluster</name>
        <dbReference type="ChEBI" id="CHEBI:190135"/>
    </ligand>
</feature>
<feature type="binding site" evidence="1">
    <location>
        <position position="44"/>
    </location>
    <ligand>
        <name>[2Fe-2S] cluster</name>
        <dbReference type="ChEBI" id="CHEBI:190135"/>
    </ligand>
</feature>
<feature type="binding site" evidence="1">
    <location>
        <position position="47"/>
    </location>
    <ligand>
        <name>[2Fe-2S] cluster</name>
        <dbReference type="ChEBI" id="CHEBI:190135"/>
    </ligand>
</feature>
<feature type="binding site" evidence="1">
    <location>
        <position position="77"/>
    </location>
    <ligand>
        <name>[2Fe-2S] cluster</name>
        <dbReference type="ChEBI" id="CHEBI:190135"/>
    </ligand>
</feature>
<accession>P00222</accession>
<sequence length="97" mass="10437">ATYKVKLVTPSGQQEFQCPDDVYILDQAEEVGIDLPYSCRAGSCSSCAGKVKVGDVDQSDGSFLDDEQIGEGWVLTCVAYPVSDGTIETHKEEELTA</sequence>
<proteinExistence type="evidence at protein level"/>
<protein>
    <recommendedName>
        <fullName>Ferredoxin</fullName>
    </recommendedName>
</protein>
<reference key="1">
    <citation type="journal article" date="1970" name="Biochem. Biophys. Res. Commun.">
        <title>The amino acid sequence of taro ferredoxin.</title>
        <authorList>
            <person name="Rao K.K."/>
            <person name="Matsubara H."/>
        </authorList>
    </citation>
    <scope>PROTEIN SEQUENCE</scope>
</reference>
<keyword id="KW-0001">2Fe-2S</keyword>
<keyword id="KW-0150">Chloroplast</keyword>
<keyword id="KW-0903">Direct protein sequencing</keyword>
<keyword id="KW-0249">Electron transport</keyword>
<keyword id="KW-0408">Iron</keyword>
<keyword id="KW-0411">Iron-sulfur</keyword>
<keyword id="KW-0479">Metal-binding</keyword>
<keyword id="KW-0934">Plastid</keyword>
<keyword id="KW-0813">Transport</keyword>
<dbReference type="PIR" id="A00229">
    <property type="entry name" value="FETA"/>
</dbReference>
<dbReference type="SMR" id="P00222"/>
<dbReference type="GO" id="GO:0009570">
    <property type="term" value="C:chloroplast stroma"/>
    <property type="evidence" value="ECO:0007669"/>
    <property type="project" value="TreeGrafter"/>
</dbReference>
<dbReference type="GO" id="GO:0051537">
    <property type="term" value="F:2 iron, 2 sulfur cluster binding"/>
    <property type="evidence" value="ECO:0007669"/>
    <property type="project" value="UniProtKB-KW"/>
</dbReference>
<dbReference type="GO" id="GO:0009055">
    <property type="term" value="F:electron transfer activity"/>
    <property type="evidence" value="ECO:0007669"/>
    <property type="project" value="InterPro"/>
</dbReference>
<dbReference type="GO" id="GO:0046872">
    <property type="term" value="F:metal ion binding"/>
    <property type="evidence" value="ECO:0007669"/>
    <property type="project" value="UniProtKB-KW"/>
</dbReference>
<dbReference type="GO" id="GO:0022900">
    <property type="term" value="P:electron transport chain"/>
    <property type="evidence" value="ECO:0007669"/>
    <property type="project" value="InterPro"/>
</dbReference>
<dbReference type="CDD" id="cd00207">
    <property type="entry name" value="fer2"/>
    <property type="match status" value="1"/>
</dbReference>
<dbReference type="FunFam" id="3.10.20.30:FF:000014">
    <property type="entry name" value="Ferredoxin"/>
    <property type="match status" value="1"/>
</dbReference>
<dbReference type="Gene3D" id="3.10.20.30">
    <property type="match status" value="1"/>
</dbReference>
<dbReference type="InterPro" id="IPR036010">
    <property type="entry name" value="2Fe-2S_ferredoxin-like_sf"/>
</dbReference>
<dbReference type="InterPro" id="IPR001041">
    <property type="entry name" value="2Fe-2S_ferredoxin-type"/>
</dbReference>
<dbReference type="InterPro" id="IPR006058">
    <property type="entry name" value="2Fe2S_fd_BS"/>
</dbReference>
<dbReference type="InterPro" id="IPR012675">
    <property type="entry name" value="Beta-grasp_dom_sf"/>
</dbReference>
<dbReference type="InterPro" id="IPR010241">
    <property type="entry name" value="Fd_pln"/>
</dbReference>
<dbReference type="NCBIfam" id="TIGR02008">
    <property type="entry name" value="fdx_plant"/>
    <property type="match status" value="1"/>
</dbReference>
<dbReference type="PANTHER" id="PTHR43112">
    <property type="entry name" value="FERREDOXIN"/>
    <property type="match status" value="1"/>
</dbReference>
<dbReference type="PANTHER" id="PTHR43112:SF3">
    <property type="entry name" value="FERREDOXIN-2, CHLOROPLASTIC"/>
    <property type="match status" value="1"/>
</dbReference>
<dbReference type="Pfam" id="PF00111">
    <property type="entry name" value="Fer2"/>
    <property type="match status" value="1"/>
</dbReference>
<dbReference type="SUPFAM" id="SSF54292">
    <property type="entry name" value="2Fe-2S ferredoxin-like"/>
    <property type="match status" value="1"/>
</dbReference>
<dbReference type="PROSITE" id="PS00197">
    <property type="entry name" value="2FE2S_FER_1"/>
    <property type="match status" value="1"/>
</dbReference>
<dbReference type="PROSITE" id="PS51085">
    <property type="entry name" value="2FE2S_FER_2"/>
    <property type="match status" value="1"/>
</dbReference>
<name>FER_COLES</name>
<evidence type="ECO:0000255" key="1">
    <source>
        <dbReference type="PROSITE-ProRule" id="PRU00465"/>
    </source>
</evidence>
<evidence type="ECO:0000305" key="2"/>
<organism>
    <name type="scientific">Colocasia esculenta</name>
    <name type="common">Wild taro</name>
    <name type="synonym">Arum esculentum</name>
    <dbReference type="NCBI Taxonomy" id="4460"/>
    <lineage>
        <taxon>Eukaryota</taxon>
        <taxon>Viridiplantae</taxon>
        <taxon>Streptophyta</taxon>
        <taxon>Embryophyta</taxon>
        <taxon>Tracheophyta</taxon>
        <taxon>Spermatophyta</taxon>
        <taxon>Magnoliopsida</taxon>
        <taxon>Liliopsida</taxon>
        <taxon>Araceae</taxon>
        <taxon>Aroideae</taxon>
        <taxon>Colocasieae</taxon>
        <taxon>Colocasia</taxon>
    </lineage>
</organism>
<comment type="function">
    <text>Ferredoxins are iron-sulfur proteins that transfer electrons in a wide variety of metabolic reactions.</text>
</comment>
<comment type="cofactor">
    <cofactor>
        <name>[2Fe-2S] cluster</name>
        <dbReference type="ChEBI" id="CHEBI:190135"/>
    </cofactor>
    <text>Binds 1 [2Fe-2S] cluster.</text>
</comment>
<comment type="subcellular location">
    <subcellularLocation>
        <location>Plastid</location>
        <location>Chloroplast</location>
    </subcellularLocation>
</comment>
<comment type="similarity">
    <text evidence="2">Belongs to the 2Fe2S plant-type ferredoxin family.</text>
</comment>